<comment type="miscellaneous">
    <text evidence="2">Almost completely overlaps RPL8B.</text>
</comment>
<comment type="caution">
    <text evidence="3">Product of a dubious gene prediction unlikely to encode a functional protein. Because of that it is not part of the S.cerevisiae S288c complete/reference proteome set.</text>
</comment>
<accession>Q07880</accession>
<dbReference type="EMBL" id="Z73150">
    <property type="protein sequence ID" value="CAA97496.1"/>
    <property type="molecule type" value="Genomic_DNA"/>
</dbReference>
<dbReference type="PIR" id="S64796">
    <property type="entry name" value="S64796"/>
</dbReference>
<dbReference type="STRING" id="4932.YLL044W"/>
<dbReference type="PaxDb" id="4932-YLL044W"/>
<dbReference type="EnsemblFungi" id="YLL044W_mRNA">
    <property type="protein sequence ID" value="YLL044W"/>
    <property type="gene ID" value="YLL044W"/>
</dbReference>
<dbReference type="AGR" id="SGD:S000003967"/>
<dbReference type="SGD" id="S000003967">
    <property type="gene designation" value="YLL044W"/>
</dbReference>
<dbReference type="HOGENOM" id="CLU_1760249_0_0_1"/>
<dbReference type="ChiTaRS" id="YLL044W">
    <property type="organism name" value="yeast"/>
</dbReference>
<evidence type="ECO:0000255" key="1"/>
<evidence type="ECO:0000305" key="2"/>
<evidence type="ECO:0000305" key="3">
    <source>
    </source>
</evidence>
<name>YL044_YEAST</name>
<organism>
    <name type="scientific">Saccharomyces cerevisiae (strain ATCC 204508 / S288c)</name>
    <name type="common">Baker's yeast</name>
    <dbReference type="NCBI Taxonomy" id="559292"/>
    <lineage>
        <taxon>Eukaryota</taxon>
        <taxon>Fungi</taxon>
        <taxon>Dikarya</taxon>
        <taxon>Ascomycota</taxon>
        <taxon>Saccharomycotina</taxon>
        <taxon>Saccharomycetes</taxon>
        <taxon>Saccharomycetales</taxon>
        <taxon>Saccharomycetaceae</taxon>
        <taxon>Saccharomyces</taxon>
    </lineage>
</organism>
<protein>
    <recommendedName>
        <fullName>Putative uncharacterized protein YLL044W</fullName>
    </recommendedName>
</protein>
<keyword id="KW-0732">Signal</keyword>
<proteinExistence type="uncertain"/>
<feature type="signal peptide" evidence="1">
    <location>
        <begin position="1"/>
        <end position="22"/>
    </location>
</feature>
<feature type="chain" id="PRO_0000299605" description="Putative uncharacterized protein YLL044W">
    <location>
        <begin position="23"/>
        <end position="148"/>
    </location>
</feature>
<gene>
    <name type="ordered locus">YLL044W</name>
    <name type="ORF">L0725</name>
</gene>
<reference key="1">
    <citation type="journal article" date="1997" name="Nature">
        <title>The nucleotide sequence of Saccharomyces cerevisiae chromosome XII.</title>
        <authorList>
            <person name="Johnston M."/>
            <person name="Hillier L.W."/>
            <person name="Riles L."/>
            <person name="Albermann K."/>
            <person name="Andre B."/>
            <person name="Ansorge W."/>
            <person name="Benes V."/>
            <person name="Brueckner M."/>
            <person name="Delius H."/>
            <person name="Dubois E."/>
            <person name="Duesterhoeft A."/>
            <person name="Entian K.-D."/>
            <person name="Floeth M."/>
            <person name="Goffeau A."/>
            <person name="Hebling U."/>
            <person name="Heumann K."/>
            <person name="Heuss-Neitzel D."/>
            <person name="Hilbert H."/>
            <person name="Hilger F."/>
            <person name="Kleine K."/>
            <person name="Koetter P."/>
            <person name="Louis E.J."/>
            <person name="Messenguy F."/>
            <person name="Mewes H.-W."/>
            <person name="Miosga T."/>
            <person name="Moestl D."/>
            <person name="Mueller-Auer S."/>
            <person name="Nentwich U."/>
            <person name="Obermaier B."/>
            <person name="Piravandi E."/>
            <person name="Pohl T.M."/>
            <person name="Portetelle D."/>
            <person name="Purnelle B."/>
            <person name="Rechmann S."/>
            <person name="Rieger M."/>
            <person name="Rinke M."/>
            <person name="Rose M."/>
            <person name="Scharfe M."/>
            <person name="Scherens B."/>
            <person name="Scholler P."/>
            <person name="Schwager C."/>
            <person name="Schwarz S."/>
            <person name="Underwood A.P."/>
            <person name="Urrestarazu L.A."/>
            <person name="Vandenbol M."/>
            <person name="Verhasselt P."/>
            <person name="Vierendeels F."/>
            <person name="Voet M."/>
            <person name="Volckaert G."/>
            <person name="Voss H."/>
            <person name="Wambutt R."/>
            <person name="Wedler E."/>
            <person name="Wedler H."/>
            <person name="Zimmermann F.K."/>
            <person name="Zollner A."/>
            <person name="Hani J."/>
            <person name="Hoheisel J.D."/>
        </authorList>
    </citation>
    <scope>NUCLEOTIDE SEQUENCE [LARGE SCALE GENOMIC DNA]</scope>
    <source>
        <strain>ATCC 204508 / S288c</strain>
    </source>
</reference>
<reference key="2">
    <citation type="journal article" date="2014" name="G3 (Bethesda)">
        <title>The reference genome sequence of Saccharomyces cerevisiae: Then and now.</title>
        <authorList>
            <person name="Engel S.R."/>
            <person name="Dietrich F.S."/>
            <person name="Fisk D.G."/>
            <person name="Binkley G."/>
            <person name="Balakrishnan R."/>
            <person name="Costanzo M.C."/>
            <person name="Dwight S.S."/>
            <person name="Hitz B.C."/>
            <person name="Karra K."/>
            <person name="Nash R.S."/>
            <person name="Weng S."/>
            <person name="Wong E.D."/>
            <person name="Lloyd P."/>
            <person name="Skrzypek M.S."/>
            <person name="Miyasato S.R."/>
            <person name="Simison M."/>
            <person name="Cherry J.M."/>
        </authorList>
    </citation>
    <scope>GENOME REANNOTATION</scope>
    <source>
        <strain>ATCC 204508 / S288c</strain>
    </source>
</reference>
<sequence>MVQTVLNSVWLWRSVLLRLTFSDSGSFLGQSFLLFSSGFWSVLVEQLEGFSSGVSVQSVLELSNGWRNLQSDGQDLLLSLQSDIFWPFDVSGQVSLWLDSLANTEVLWSRVSQWVLSLVRLSGLSTEWSWSNFLTWSHLFFQLSCSLY</sequence>